<organism>
    <name type="scientific">Yersinia pestis bv. Antiqua (strain Antiqua)</name>
    <dbReference type="NCBI Taxonomy" id="360102"/>
    <lineage>
        <taxon>Bacteria</taxon>
        <taxon>Pseudomonadati</taxon>
        <taxon>Pseudomonadota</taxon>
        <taxon>Gammaproteobacteria</taxon>
        <taxon>Enterobacterales</taxon>
        <taxon>Yersiniaceae</taxon>
        <taxon>Yersinia</taxon>
    </lineage>
</organism>
<feature type="chain" id="PRO_1000006915" description="Phenylalanine--tRNA ligase alpha subunit">
    <location>
        <begin position="1"/>
        <end position="327"/>
    </location>
</feature>
<feature type="binding site" evidence="1">
    <location>
        <position position="252"/>
    </location>
    <ligand>
        <name>Mg(2+)</name>
        <dbReference type="ChEBI" id="CHEBI:18420"/>
        <note>shared with beta subunit</note>
    </ligand>
</feature>
<reference key="1">
    <citation type="journal article" date="2006" name="J. Bacteriol.">
        <title>Complete genome sequence of Yersinia pestis strains Antiqua and Nepal516: evidence of gene reduction in an emerging pathogen.</title>
        <authorList>
            <person name="Chain P.S.G."/>
            <person name="Hu P."/>
            <person name="Malfatti S.A."/>
            <person name="Radnedge L."/>
            <person name="Larimer F."/>
            <person name="Vergez L.M."/>
            <person name="Worsham P."/>
            <person name="Chu M.C."/>
            <person name="Andersen G.L."/>
        </authorList>
    </citation>
    <scope>NUCLEOTIDE SEQUENCE [LARGE SCALE GENOMIC DNA]</scope>
    <source>
        <strain>Antiqua</strain>
    </source>
</reference>
<sequence length="327" mass="37153">MPHLAELVAKAKAAVEGAQDIAALDLVRVEYLGKKGHLTLQMTSLRELPAEERPAAGAVINQAKQEIQEALNARKEKLESAVLNARLAAETIDVSLPGRRMENGGLHPVTRTIERIETFFGELGFSVESGPEIEDDYHNFDALNIPAHHPARADHDTFWFDATRLLRTQTSGVQIRTMQEQQPPIRIIVPGRVYRNDYDQTHTPMFHQMEGLIVDRDISFTNLKGTLHDFLRNFFEEDLQIRFRPSYFPFTEPSAEVDVMGKNGKWLEVLGCGMVHPNVLRNVGIDPEIYSGFAFGMGMERLTMLRYGVTDLRAFFENDLRFLKQFK</sequence>
<name>SYFA_YERPA</name>
<accession>Q1C733</accession>
<proteinExistence type="inferred from homology"/>
<protein>
    <recommendedName>
        <fullName evidence="1">Phenylalanine--tRNA ligase alpha subunit</fullName>
        <ecNumber evidence="1">6.1.1.20</ecNumber>
    </recommendedName>
    <alternativeName>
        <fullName evidence="1">Phenylalanyl-tRNA synthetase alpha subunit</fullName>
        <shortName evidence="1">PheRS</shortName>
    </alternativeName>
</protein>
<gene>
    <name evidence="1" type="primary">pheS</name>
    <name type="ordered locus">YPA_1773</name>
</gene>
<dbReference type="EC" id="6.1.1.20" evidence="1"/>
<dbReference type="EMBL" id="CP000308">
    <property type="protein sequence ID" value="ABG13739.1"/>
    <property type="molecule type" value="Genomic_DNA"/>
</dbReference>
<dbReference type="RefSeq" id="WP_002220280.1">
    <property type="nucleotide sequence ID" value="NC_008150.1"/>
</dbReference>
<dbReference type="SMR" id="Q1C733"/>
<dbReference type="KEGG" id="ypa:YPA_1773"/>
<dbReference type="Proteomes" id="UP000001971">
    <property type="component" value="Chromosome"/>
</dbReference>
<dbReference type="GO" id="GO:0005737">
    <property type="term" value="C:cytoplasm"/>
    <property type="evidence" value="ECO:0007669"/>
    <property type="project" value="UniProtKB-SubCell"/>
</dbReference>
<dbReference type="GO" id="GO:0005524">
    <property type="term" value="F:ATP binding"/>
    <property type="evidence" value="ECO:0007669"/>
    <property type="project" value="UniProtKB-UniRule"/>
</dbReference>
<dbReference type="GO" id="GO:0000287">
    <property type="term" value="F:magnesium ion binding"/>
    <property type="evidence" value="ECO:0007669"/>
    <property type="project" value="UniProtKB-UniRule"/>
</dbReference>
<dbReference type="GO" id="GO:0004826">
    <property type="term" value="F:phenylalanine-tRNA ligase activity"/>
    <property type="evidence" value="ECO:0007669"/>
    <property type="project" value="UniProtKB-UniRule"/>
</dbReference>
<dbReference type="GO" id="GO:0000049">
    <property type="term" value="F:tRNA binding"/>
    <property type="evidence" value="ECO:0007669"/>
    <property type="project" value="InterPro"/>
</dbReference>
<dbReference type="GO" id="GO:0006432">
    <property type="term" value="P:phenylalanyl-tRNA aminoacylation"/>
    <property type="evidence" value="ECO:0007669"/>
    <property type="project" value="UniProtKB-UniRule"/>
</dbReference>
<dbReference type="CDD" id="cd00496">
    <property type="entry name" value="PheRS_alpha_core"/>
    <property type="match status" value="1"/>
</dbReference>
<dbReference type="FunFam" id="3.30.930.10:FF:000003">
    <property type="entry name" value="Phenylalanine--tRNA ligase alpha subunit"/>
    <property type="match status" value="1"/>
</dbReference>
<dbReference type="Gene3D" id="3.30.930.10">
    <property type="entry name" value="Bira Bifunctional Protein, Domain 2"/>
    <property type="match status" value="1"/>
</dbReference>
<dbReference type="HAMAP" id="MF_00281">
    <property type="entry name" value="Phe_tRNA_synth_alpha1"/>
    <property type="match status" value="1"/>
</dbReference>
<dbReference type="InterPro" id="IPR006195">
    <property type="entry name" value="aa-tRNA-synth_II"/>
</dbReference>
<dbReference type="InterPro" id="IPR045864">
    <property type="entry name" value="aa-tRNA-synth_II/BPL/LPL"/>
</dbReference>
<dbReference type="InterPro" id="IPR004529">
    <property type="entry name" value="Phe-tRNA-synth_IIc_asu"/>
</dbReference>
<dbReference type="InterPro" id="IPR004188">
    <property type="entry name" value="Phe-tRNA_ligase_II_N"/>
</dbReference>
<dbReference type="InterPro" id="IPR022911">
    <property type="entry name" value="Phe_tRNA_ligase_alpha1_bac"/>
</dbReference>
<dbReference type="InterPro" id="IPR002319">
    <property type="entry name" value="Phenylalanyl-tRNA_Synthase"/>
</dbReference>
<dbReference type="InterPro" id="IPR010978">
    <property type="entry name" value="tRNA-bd_arm"/>
</dbReference>
<dbReference type="NCBIfam" id="TIGR00468">
    <property type="entry name" value="pheS"/>
    <property type="match status" value="1"/>
</dbReference>
<dbReference type="PANTHER" id="PTHR11538:SF41">
    <property type="entry name" value="PHENYLALANINE--TRNA LIGASE, MITOCHONDRIAL"/>
    <property type="match status" value="1"/>
</dbReference>
<dbReference type="PANTHER" id="PTHR11538">
    <property type="entry name" value="PHENYLALANYL-TRNA SYNTHETASE"/>
    <property type="match status" value="1"/>
</dbReference>
<dbReference type="Pfam" id="PF02912">
    <property type="entry name" value="Phe_tRNA-synt_N"/>
    <property type="match status" value="1"/>
</dbReference>
<dbReference type="Pfam" id="PF01409">
    <property type="entry name" value="tRNA-synt_2d"/>
    <property type="match status" value="1"/>
</dbReference>
<dbReference type="SUPFAM" id="SSF55681">
    <property type="entry name" value="Class II aaRS and biotin synthetases"/>
    <property type="match status" value="1"/>
</dbReference>
<dbReference type="SUPFAM" id="SSF46589">
    <property type="entry name" value="tRNA-binding arm"/>
    <property type="match status" value="1"/>
</dbReference>
<dbReference type="PROSITE" id="PS50862">
    <property type="entry name" value="AA_TRNA_LIGASE_II"/>
    <property type="match status" value="1"/>
</dbReference>
<evidence type="ECO:0000255" key="1">
    <source>
        <dbReference type="HAMAP-Rule" id="MF_00281"/>
    </source>
</evidence>
<keyword id="KW-0030">Aminoacyl-tRNA synthetase</keyword>
<keyword id="KW-0067">ATP-binding</keyword>
<keyword id="KW-0963">Cytoplasm</keyword>
<keyword id="KW-0436">Ligase</keyword>
<keyword id="KW-0460">Magnesium</keyword>
<keyword id="KW-0479">Metal-binding</keyword>
<keyword id="KW-0547">Nucleotide-binding</keyword>
<keyword id="KW-0648">Protein biosynthesis</keyword>
<comment type="catalytic activity">
    <reaction evidence="1">
        <text>tRNA(Phe) + L-phenylalanine + ATP = L-phenylalanyl-tRNA(Phe) + AMP + diphosphate + H(+)</text>
        <dbReference type="Rhea" id="RHEA:19413"/>
        <dbReference type="Rhea" id="RHEA-COMP:9668"/>
        <dbReference type="Rhea" id="RHEA-COMP:9699"/>
        <dbReference type="ChEBI" id="CHEBI:15378"/>
        <dbReference type="ChEBI" id="CHEBI:30616"/>
        <dbReference type="ChEBI" id="CHEBI:33019"/>
        <dbReference type="ChEBI" id="CHEBI:58095"/>
        <dbReference type="ChEBI" id="CHEBI:78442"/>
        <dbReference type="ChEBI" id="CHEBI:78531"/>
        <dbReference type="ChEBI" id="CHEBI:456215"/>
        <dbReference type="EC" id="6.1.1.20"/>
    </reaction>
</comment>
<comment type="cofactor">
    <cofactor evidence="1">
        <name>Mg(2+)</name>
        <dbReference type="ChEBI" id="CHEBI:18420"/>
    </cofactor>
    <text evidence="1">Binds 2 magnesium ions per tetramer.</text>
</comment>
<comment type="subunit">
    <text evidence="1">Tetramer of two alpha and two beta subunits.</text>
</comment>
<comment type="subcellular location">
    <subcellularLocation>
        <location evidence="1">Cytoplasm</location>
    </subcellularLocation>
</comment>
<comment type="similarity">
    <text evidence="1">Belongs to the class-II aminoacyl-tRNA synthetase family. Phe-tRNA synthetase alpha subunit type 1 subfamily.</text>
</comment>